<keyword id="KW-0002">3D-structure</keyword>
<keyword id="KW-0067">ATP-binding</keyword>
<keyword id="KW-0418">Kinase</keyword>
<keyword id="KW-0460">Magnesium</keyword>
<keyword id="KW-0479">Metal-binding</keyword>
<keyword id="KW-0547">Nucleotide-binding</keyword>
<keyword id="KW-1185">Reference proteome</keyword>
<keyword id="KW-0784">Thiamine biosynthesis</keyword>
<keyword id="KW-0808">Transferase</keyword>
<name>THIM_BACSU</name>
<sequence>MDAQSAAKCLTAVRRHSPLVHSITNNVVTNFTANGLLALGASPVMAYAKEEVADMAKIAGALVLNIGTLSKESVEAMIIAGKSANEHGVPVILDPVGAGATPFRTESARDIIREVRLAAIRGNAAEIAHTVGVTDWLIKGVDAGEGGGDIIRLAQQAAQKLNTVIAITGEVDVIADTSHVYTLHNGHKLLTKVTGAGCLLTSVVGAFCAVEENPLFAAIAAISSYGVAAQLAAQQTADKGPGSFQIELLNKLSTVTEQDVQEWATIERVTVS</sequence>
<proteinExistence type="evidence at protein level"/>
<organism>
    <name type="scientific">Bacillus subtilis (strain 168)</name>
    <dbReference type="NCBI Taxonomy" id="224308"/>
    <lineage>
        <taxon>Bacteria</taxon>
        <taxon>Bacillati</taxon>
        <taxon>Bacillota</taxon>
        <taxon>Bacilli</taxon>
        <taxon>Bacillales</taxon>
        <taxon>Bacillaceae</taxon>
        <taxon>Bacillus</taxon>
    </lineage>
</organism>
<evidence type="ECO:0000255" key="1">
    <source>
        <dbReference type="HAMAP-Rule" id="MF_00228"/>
    </source>
</evidence>
<evidence type="ECO:0000269" key="2">
    <source>
    </source>
</evidence>
<evidence type="ECO:0000269" key="3">
    <source>
    </source>
</evidence>
<evidence type="ECO:0007829" key="4">
    <source>
        <dbReference type="PDB" id="1EKK"/>
    </source>
</evidence>
<evidence type="ECO:0007829" key="5">
    <source>
        <dbReference type="PDB" id="1EKQ"/>
    </source>
</evidence>
<evidence type="ECO:0007829" key="6">
    <source>
        <dbReference type="PDB" id="1ESJ"/>
    </source>
</evidence>
<feature type="chain" id="PRO_0000156927" description="Hydroxyethylthiazole kinase">
    <location>
        <begin position="1"/>
        <end position="272"/>
    </location>
</feature>
<feature type="binding site" evidence="1 2">
    <location>
        <position position="45"/>
    </location>
    <ligand>
        <name>substrate</name>
    </ligand>
</feature>
<feature type="binding site">
    <location>
        <position position="121"/>
    </location>
    <ligand>
        <name>ATP</name>
        <dbReference type="ChEBI" id="CHEBI:30616"/>
    </ligand>
</feature>
<feature type="binding site">
    <location>
        <position position="168"/>
    </location>
    <ligand>
        <name>ATP</name>
        <dbReference type="ChEBI" id="CHEBI:30616"/>
    </ligand>
</feature>
<feature type="binding site" evidence="1 2">
    <location>
        <position position="195"/>
    </location>
    <ligand>
        <name>substrate</name>
    </ligand>
</feature>
<feature type="mutagenesis site" description="Reduces activity by 60%." evidence="2">
    <original>C</original>
    <variation>A</variation>
    <location>
        <position position="198"/>
    </location>
</feature>
<feature type="mutagenesis site" description="Increases activity 10-fold." evidence="2">
    <original>C</original>
    <variation>D</variation>
    <location>
        <position position="198"/>
    </location>
</feature>
<feature type="mutagenesis site" description="Reduces activity by 80%." evidence="2">
    <original>C</original>
    <variation>S</variation>
    <location>
        <position position="198"/>
    </location>
</feature>
<feature type="helix" evidence="5">
    <location>
        <begin position="3"/>
        <end position="16"/>
    </location>
</feature>
<feature type="strand" evidence="5">
    <location>
        <begin position="19"/>
        <end position="23"/>
    </location>
</feature>
<feature type="turn" evidence="5">
    <location>
        <begin position="26"/>
        <end position="28"/>
    </location>
</feature>
<feature type="helix" evidence="5">
    <location>
        <begin position="29"/>
        <end position="39"/>
    </location>
</feature>
<feature type="strand" evidence="5">
    <location>
        <begin position="42"/>
        <end position="44"/>
    </location>
</feature>
<feature type="turn" evidence="5">
    <location>
        <begin position="49"/>
        <end position="51"/>
    </location>
</feature>
<feature type="helix" evidence="5">
    <location>
        <begin position="52"/>
        <end position="58"/>
    </location>
</feature>
<feature type="strand" evidence="5">
    <location>
        <begin position="59"/>
        <end position="65"/>
    </location>
</feature>
<feature type="helix" evidence="5">
    <location>
        <begin position="71"/>
        <end position="86"/>
    </location>
</feature>
<feature type="strand" evidence="5">
    <location>
        <begin position="91"/>
        <end position="94"/>
    </location>
</feature>
<feature type="helix" evidence="5">
    <location>
        <begin position="102"/>
        <end position="114"/>
    </location>
</feature>
<feature type="strand" evidence="5">
    <location>
        <begin position="118"/>
        <end position="122"/>
    </location>
</feature>
<feature type="helix" evidence="5">
    <location>
        <begin position="124"/>
        <end position="130"/>
    </location>
</feature>
<feature type="strand" evidence="6">
    <location>
        <begin position="133"/>
        <end position="138"/>
    </location>
</feature>
<feature type="helix" evidence="5">
    <location>
        <begin position="148"/>
        <end position="161"/>
    </location>
</feature>
<feature type="strand" evidence="5">
    <location>
        <begin position="163"/>
        <end position="167"/>
    </location>
</feature>
<feature type="strand" evidence="5">
    <location>
        <begin position="169"/>
        <end position="175"/>
    </location>
</feature>
<feature type="strand" evidence="5">
    <location>
        <begin position="180"/>
        <end position="183"/>
    </location>
</feature>
<feature type="helix" evidence="5">
    <location>
        <begin position="188"/>
        <end position="192"/>
    </location>
</feature>
<feature type="helix" evidence="5">
    <location>
        <begin position="196"/>
        <end position="208"/>
    </location>
</feature>
<feature type="helix" evidence="5">
    <location>
        <begin position="214"/>
        <end position="236"/>
    </location>
</feature>
<feature type="turn" evidence="4">
    <location>
        <begin position="237"/>
        <end position="239"/>
    </location>
</feature>
<feature type="helix" evidence="5">
    <location>
        <begin position="241"/>
        <end position="254"/>
    </location>
</feature>
<feature type="helix" evidence="5">
    <location>
        <begin position="257"/>
        <end position="263"/>
    </location>
</feature>
<feature type="strand" evidence="5">
    <location>
        <begin position="266"/>
        <end position="269"/>
    </location>
</feature>
<accession>P39593</accession>
<gene>
    <name evidence="1" type="primary">thiM</name>
    <name type="synonym">thiK</name>
    <name type="synonym">ywbJ</name>
    <name type="ordered locus">BSU38300</name>
    <name type="ORF">ipa-25d</name>
</gene>
<reference key="1">
    <citation type="journal article" date="1993" name="Mol. Microbiol.">
        <title>Bacillus subtilis genome project: cloning and sequencing of the 97 kb region from 325 degrees to 333 degrees.</title>
        <authorList>
            <person name="Glaser P."/>
            <person name="Kunst F."/>
            <person name="Arnaud M."/>
            <person name="Coudart M.P."/>
            <person name="Gonzales W."/>
            <person name="Hullo M.-F."/>
            <person name="Ionescu M."/>
            <person name="Lubochinsky B."/>
            <person name="Marcelino L."/>
            <person name="Moszer I."/>
            <person name="Presecan E."/>
            <person name="Santana M."/>
            <person name="Schneider E."/>
            <person name="Schweizer J."/>
            <person name="Vertes A."/>
            <person name="Rapoport G."/>
            <person name="Danchin A."/>
        </authorList>
    </citation>
    <scope>NUCLEOTIDE SEQUENCE [GENOMIC DNA]</scope>
    <source>
        <strain>168</strain>
    </source>
</reference>
<reference key="2">
    <citation type="journal article" date="1997" name="Nature">
        <title>The complete genome sequence of the Gram-positive bacterium Bacillus subtilis.</title>
        <authorList>
            <person name="Kunst F."/>
            <person name="Ogasawara N."/>
            <person name="Moszer I."/>
            <person name="Albertini A.M."/>
            <person name="Alloni G."/>
            <person name="Azevedo V."/>
            <person name="Bertero M.G."/>
            <person name="Bessieres P."/>
            <person name="Bolotin A."/>
            <person name="Borchert S."/>
            <person name="Borriss R."/>
            <person name="Boursier L."/>
            <person name="Brans A."/>
            <person name="Braun M."/>
            <person name="Brignell S.C."/>
            <person name="Bron S."/>
            <person name="Brouillet S."/>
            <person name="Bruschi C.V."/>
            <person name="Caldwell B."/>
            <person name="Capuano V."/>
            <person name="Carter N.M."/>
            <person name="Choi S.-K."/>
            <person name="Codani J.-J."/>
            <person name="Connerton I.F."/>
            <person name="Cummings N.J."/>
            <person name="Daniel R.A."/>
            <person name="Denizot F."/>
            <person name="Devine K.M."/>
            <person name="Duesterhoeft A."/>
            <person name="Ehrlich S.D."/>
            <person name="Emmerson P.T."/>
            <person name="Entian K.-D."/>
            <person name="Errington J."/>
            <person name="Fabret C."/>
            <person name="Ferrari E."/>
            <person name="Foulger D."/>
            <person name="Fritz C."/>
            <person name="Fujita M."/>
            <person name="Fujita Y."/>
            <person name="Fuma S."/>
            <person name="Galizzi A."/>
            <person name="Galleron N."/>
            <person name="Ghim S.-Y."/>
            <person name="Glaser P."/>
            <person name="Goffeau A."/>
            <person name="Golightly E.J."/>
            <person name="Grandi G."/>
            <person name="Guiseppi G."/>
            <person name="Guy B.J."/>
            <person name="Haga K."/>
            <person name="Haiech J."/>
            <person name="Harwood C.R."/>
            <person name="Henaut A."/>
            <person name="Hilbert H."/>
            <person name="Holsappel S."/>
            <person name="Hosono S."/>
            <person name="Hullo M.-F."/>
            <person name="Itaya M."/>
            <person name="Jones L.-M."/>
            <person name="Joris B."/>
            <person name="Karamata D."/>
            <person name="Kasahara Y."/>
            <person name="Klaerr-Blanchard M."/>
            <person name="Klein C."/>
            <person name="Kobayashi Y."/>
            <person name="Koetter P."/>
            <person name="Koningstein G."/>
            <person name="Krogh S."/>
            <person name="Kumano M."/>
            <person name="Kurita K."/>
            <person name="Lapidus A."/>
            <person name="Lardinois S."/>
            <person name="Lauber J."/>
            <person name="Lazarevic V."/>
            <person name="Lee S.-M."/>
            <person name="Levine A."/>
            <person name="Liu H."/>
            <person name="Masuda S."/>
            <person name="Mauel C."/>
            <person name="Medigue C."/>
            <person name="Medina N."/>
            <person name="Mellado R.P."/>
            <person name="Mizuno M."/>
            <person name="Moestl D."/>
            <person name="Nakai S."/>
            <person name="Noback M."/>
            <person name="Noone D."/>
            <person name="O'Reilly M."/>
            <person name="Ogawa K."/>
            <person name="Ogiwara A."/>
            <person name="Oudega B."/>
            <person name="Park S.-H."/>
            <person name="Parro V."/>
            <person name="Pohl T.M."/>
            <person name="Portetelle D."/>
            <person name="Porwollik S."/>
            <person name="Prescott A.M."/>
            <person name="Presecan E."/>
            <person name="Pujic P."/>
            <person name="Purnelle B."/>
            <person name="Rapoport G."/>
            <person name="Rey M."/>
            <person name="Reynolds S."/>
            <person name="Rieger M."/>
            <person name="Rivolta C."/>
            <person name="Rocha E."/>
            <person name="Roche B."/>
            <person name="Rose M."/>
            <person name="Sadaie Y."/>
            <person name="Sato T."/>
            <person name="Scanlan E."/>
            <person name="Schleich S."/>
            <person name="Schroeter R."/>
            <person name="Scoffone F."/>
            <person name="Sekiguchi J."/>
            <person name="Sekowska A."/>
            <person name="Seror S.J."/>
            <person name="Serror P."/>
            <person name="Shin B.-S."/>
            <person name="Soldo B."/>
            <person name="Sorokin A."/>
            <person name="Tacconi E."/>
            <person name="Takagi T."/>
            <person name="Takahashi H."/>
            <person name="Takemaru K."/>
            <person name="Takeuchi M."/>
            <person name="Tamakoshi A."/>
            <person name="Tanaka T."/>
            <person name="Terpstra P."/>
            <person name="Tognoni A."/>
            <person name="Tosato V."/>
            <person name="Uchiyama S."/>
            <person name="Vandenbol M."/>
            <person name="Vannier F."/>
            <person name="Vassarotti A."/>
            <person name="Viari A."/>
            <person name="Wambutt R."/>
            <person name="Wedler E."/>
            <person name="Wedler H."/>
            <person name="Weitzenegger T."/>
            <person name="Winters P."/>
            <person name="Wipat A."/>
            <person name="Yamamoto H."/>
            <person name="Yamane K."/>
            <person name="Yasumoto K."/>
            <person name="Yata K."/>
            <person name="Yoshida K."/>
            <person name="Yoshikawa H.-F."/>
            <person name="Zumstein E."/>
            <person name="Yoshikawa H."/>
            <person name="Danchin A."/>
        </authorList>
    </citation>
    <scope>NUCLEOTIDE SEQUENCE [LARGE SCALE GENOMIC DNA]</scope>
    <source>
        <strain>168</strain>
    </source>
</reference>
<reference key="3">
    <citation type="journal article" date="1997" name="J. Bacteriol.">
        <title>Characterization of the Bacillus subtilis thiC operon involved in thiamine biosynthesis.</title>
        <authorList>
            <person name="Zhang Y."/>
            <person name="Taylor S.V."/>
            <person name="Chiu H.-J."/>
            <person name="Begley T.P."/>
        </authorList>
    </citation>
    <scope>FUNCTION</scope>
    <scope>CATALYTIC ACTIVITY</scope>
    <scope>PATHWAY</scope>
</reference>
<reference key="4">
    <citation type="journal article" date="2000" name="Biochemistry">
        <title>Crystal structure of 4-methyl-5-beta-hydroxyethylthiazole kinase from Bacillus subtilis at 1.5 A resolution.</title>
        <authorList>
            <person name="Campobasso N."/>
            <person name="Mathews I.I."/>
            <person name="Begley T.P."/>
            <person name="Ealick S.E."/>
        </authorList>
    </citation>
    <scope>X-RAY CRYSTALLOGRAPHY (1.5 ANGSTROMS) IN COMPLEX WITH SUBSTRATE</scope>
    <scope>COFACTOR</scope>
    <scope>SUBUNIT</scope>
    <scope>MUTAGENESIS OF CYS-198</scope>
</reference>
<protein>
    <recommendedName>
        <fullName evidence="1">Hydroxyethylthiazole kinase</fullName>
        <ecNumber evidence="1">2.7.1.50</ecNumber>
    </recommendedName>
    <alternativeName>
        <fullName evidence="1">4-methyl-5-beta-hydroxyethylthiazole kinase</fullName>
        <shortName evidence="1">TH kinase</shortName>
        <shortName evidence="1">Thz kinase</shortName>
    </alternativeName>
</protein>
<comment type="function">
    <text evidence="1 3">Catalyzes the phosphorylation of the hydroxyl group of 4-methyl-5-beta-hydroxyethylthiazole (THZ).</text>
</comment>
<comment type="catalytic activity">
    <reaction evidence="1 3">
        <text>5-(2-hydroxyethyl)-4-methylthiazole + ATP = 4-methyl-5-(2-phosphooxyethyl)-thiazole + ADP + H(+)</text>
        <dbReference type="Rhea" id="RHEA:24212"/>
        <dbReference type="ChEBI" id="CHEBI:15378"/>
        <dbReference type="ChEBI" id="CHEBI:17957"/>
        <dbReference type="ChEBI" id="CHEBI:30616"/>
        <dbReference type="ChEBI" id="CHEBI:58296"/>
        <dbReference type="ChEBI" id="CHEBI:456216"/>
        <dbReference type="EC" id="2.7.1.50"/>
    </reaction>
</comment>
<comment type="cofactor">
    <cofactor evidence="2">
        <name>Mg(2+)</name>
        <dbReference type="ChEBI" id="CHEBI:18420"/>
    </cofactor>
    <text evidence="2">Binds 2 magnesium ions per subunit. The first is coordinated via water, the second is coordinated to ATP but its significance is unclear.</text>
</comment>
<comment type="pathway">
    <text evidence="1 3">Cofactor biosynthesis; thiamine diphosphate biosynthesis; 4-methyl-5-(2-phosphoethyl)-thiazole from 5-(2-hydroxyethyl)-4-methylthiazole: step 1/1.</text>
</comment>
<comment type="subunit">
    <text evidence="2">Homotrimer.</text>
</comment>
<comment type="similarity">
    <text evidence="1">Belongs to the Thz kinase family.</text>
</comment>
<dbReference type="EC" id="2.7.1.50" evidence="1"/>
<dbReference type="EMBL" id="X73124">
    <property type="protein sequence ID" value="CAA51581.1"/>
    <property type="molecule type" value="Genomic_DNA"/>
</dbReference>
<dbReference type="EMBL" id="AL009126">
    <property type="protein sequence ID" value="CAB15856.1"/>
    <property type="molecule type" value="Genomic_DNA"/>
</dbReference>
<dbReference type="PIR" id="S39680">
    <property type="entry name" value="S39680"/>
</dbReference>
<dbReference type="RefSeq" id="NP_391709.1">
    <property type="nucleotide sequence ID" value="NC_000964.3"/>
</dbReference>
<dbReference type="RefSeq" id="WP_003244274.1">
    <property type="nucleotide sequence ID" value="NZ_OZ025638.1"/>
</dbReference>
<dbReference type="PDB" id="1C3Q">
    <property type="method" value="X-ray"/>
    <property type="resolution" value="2.00 A"/>
    <property type="chains" value="A/B/C=1-272"/>
</dbReference>
<dbReference type="PDB" id="1EKK">
    <property type="method" value="X-ray"/>
    <property type="resolution" value="2.00 A"/>
    <property type="chains" value="A/B=1-272"/>
</dbReference>
<dbReference type="PDB" id="1EKQ">
    <property type="method" value="X-ray"/>
    <property type="resolution" value="1.50 A"/>
    <property type="chains" value="A/B=1-272"/>
</dbReference>
<dbReference type="PDB" id="1ESJ">
    <property type="method" value="X-ray"/>
    <property type="resolution" value="1.80 A"/>
    <property type="chains" value="A/B/C=1-272"/>
</dbReference>
<dbReference type="PDB" id="1ESQ">
    <property type="method" value="X-ray"/>
    <property type="resolution" value="2.50 A"/>
    <property type="chains" value="A/B/C=1-272"/>
</dbReference>
<dbReference type="PDBsum" id="1C3Q"/>
<dbReference type="PDBsum" id="1EKK"/>
<dbReference type="PDBsum" id="1EKQ"/>
<dbReference type="PDBsum" id="1ESJ"/>
<dbReference type="PDBsum" id="1ESQ"/>
<dbReference type="SMR" id="P39593"/>
<dbReference type="FunCoup" id="P39593">
    <property type="interactions" value="307"/>
</dbReference>
<dbReference type="STRING" id="224308.BSU38300"/>
<dbReference type="DrugBank" id="DB02969">
    <property type="generic name" value="5-(2-hydroxyethyl)-4-methylthiazole"/>
</dbReference>
<dbReference type="PaxDb" id="224308-BSU38300"/>
<dbReference type="EnsemblBacteria" id="CAB15856">
    <property type="protein sequence ID" value="CAB15856"/>
    <property type="gene ID" value="BSU_38300"/>
</dbReference>
<dbReference type="GeneID" id="938519"/>
<dbReference type="KEGG" id="bsu:BSU38300"/>
<dbReference type="PATRIC" id="fig|224308.179.peg.4146"/>
<dbReference type="eggNOG" id="COG2145">
    <property type="taxonomic scope" value="Bacteria"/>
</dbReference>
<dbReference type="InParanoid" id="P39593"/>
<dbReference type="OrthoDB" id="9778146at2"/>
<dbReference type="PhylomeDB" id="P39593"/>
<dbReference type="BioCyc" id="BSUB:BSU38300-MONOMER"/>
<dbReference type="BioCyc" id="MetaCyc:BSU38300-MONOMER"/>
<dbReference type="BRENDA" id="2.7.1.50">
    <property type="organism ID" value="658"/>
</dbReference>
<dbReference type="UniPathway" id="UPA00060">
    <property type="reaction ID" value="UER00139"/>
</dbReference>
<dbReference type="EvolutionaryTrace" id="P39593"/>
<dbReference type="Proteomes" id="UP000001570">
    <property type="component" value="Chromosome"/>
</dbReference>
<dbReference type="GO" id="GO:0005524">
    <property type="term" value="F:ATP binding"/>
    <property type="evidence" value="ECO:0007669"/>
    <property type="project" value="UniProtKB-UniRule"/>
</dbReference>
<dbReference type="GO" id="GO:0004417">
    <property type="term" value="F:hydroxyethylthiazole kinase activity"/>
    <property type="evidence" value="ECO:0007669"/>
    <property type="project" value="UniProtKB-UniRule"/>
</dbReference>
<dbReference type="GO" id="GO:0000287">
    <property type="term" value="F:magnesium ion binding"/>
    <property type="evidence" value="ECO:0007669"/>
    <property type="project" value="UniProtKB-UniRule"/>
</dbReference>
<dbReference type="GO" id="GO:0009228">
    <property type="term" value="P:thiamine biosynthetic process"/>
    <property type="evidence" value="ECO:0007669"/>
    <property type="project" value="UniProtKB-KW"/>
</dbReference>
<dbReference type="GO" id="GO:0009229">
    <property type="term" value="P:thiamine diphosphate biosynthetic process"/>
    <property type="evidence" value="ECO:0007669"/>
    <property type="project" value="UniProtKB-UniRule"/>
</dbReference>
<dbReference type="CDD" id="cd01170">
    <property type="entry name" value="THZ_kinase"/>
    <property type="match status" value="1"/>
</dbReference>
<dbReference type="Gene3D" id="3.40.1190.20">
    <property type="match status" value="1"/>
</dbReference>
<dbReference type="HAMAP" id="MF_00228">
    <property type="entry name" value="Thz_kinase"/>
    <property type="match status" value="1"/>
</dbReference>
<dbReference type="InterPro" id="IPR000417">
    <property type="entry name" value="Hyethyz_kinase"/>
</dbReference>
<dbReference type="InterPro" id="IPR029056">
    <property type="entry name" value="Ribokinase-like"/>
</dbReference>
<dbReference type="NCBIfam" id="NF006830">
    <property type="entry name" value="PRK09355.1"/>
    <property type="match status" value="1"/>
</dbReference>
<dbReference type="NCBIfam" id="TIGR00694">
    <property type="entry name" value="thiM"/>
    <property type="match status" value="1"/>
</dbReference>
<dbReference type="Pfam" id="PF02110">
    <property type="entry name" value="HK"/>
    <property type="match status" value="1"/>
</dbReference>
<dbReference type="PIRSF" id="PIRSF000513">
    <property type="entry name" value="Thz_kinase"/>
    <property type="match status" value="1"/>
</dbReference>
<dbReference type="PRINTS" id="PR01099">
    <property type="entry name" value="HYETHTZKNASE"/>
</dbReference>
<dbReference type="SUPFAM" id="SSF53613">
    <property type="entry name" value="Ribokinase-like"/>
    <property type="match status" value="1"/>
</dbReference>